<comment type="function">
    <text evidence="1">Viral suppressor of RNA silencing which binds specifically to silencing RNAs (siRNAs). Acts as a molecular caliper to specifically select siRNAs based on the length of the duplex region of the RNA (By similarity).</text>
</comment>
<comment type="subunit">
    <text evidence="1">Homodimer.</text>
</comment>
<comment type="similarity">
    <text evidence="3">Belongs to the tombusvirus protein p19 family.</text>
</comment>
<gene>
    <name type="ORF">ORF4</name>
</gene>
<keyword id="KW-0945">Host-virus interaction</keyword>
<keyword id="KW-1090">Inhibition of host innate immune response by virus</keyword>
<keyword id="KW-0694">RNA-binding</keyword>
<keyword id="KW-0941">Suppressor of RNA silencing</keyword>
<keyword id="KW-0899">Viral immunoevasion</keyword>
<accession>Q67BS9</accession>
<organism>
    <name type="scientific">Havel river virus</name>
    <name type="common">HaRV</name>
    <dbReference type="NCBI Taxonomy" id="254711"/>
    <lineage>
        <taxon>Viruses</taxon>
        <taxon>Riboviria</taxon>
        <taxon>Orthornavirae</taxon>
        <taxon>Kitrinoviricota</taxon>
        <taxon>Tolucaviricetes</taxon>
        <taxon>Tolivirales</taxon>
        <taxon>Tombusviridae</taxon>
        <taxon>Procedovirinae</taxon>
        <taxon>Tombusvirus</taxon>
        <taxon>Tombusvirus havelfluminis</taxon>
    </lineage>
</organism>
<sequence length="172" mass="19082">MEGAIQGSDAREQANSERWDGGCGGTITPFKLPDESPGLHEWRLHNSEESEDKDHPLGFKESWGFGKVVFKRYLRYDGTEASLHRALGSWERGSVNDAASRFLGLGQVGCTYSIRFRGSCLTLSGGSRTLQRLIEMAIRTKRTMLQLTPSEVEGNVSRGRPEGAKAFEKESE</sequence>
<feature type="chain" id="PRO_0000222875" description="RNA silencing suppressor p19">
    <location>
        <begin position="1"/>
        <end position="172"/>
    </location>
</feature>
<feature type="region of interest" description="Disordered" evidence="2">
    <location>
        <begin position="1"/>
        <end position="38"/>
    </location>
</feature>
<feature type="region of interest" description="Disordered" evidence="2">
    <location>
        <begin position="152"/>
        <end position="172"/>
    </location>
</feature>
<feature type="compositionally biased region" description="Basic and acidic residues" evidence="2">
    <location>
        <begin position="9"/>
        <end position="20"/>
    </location>
</feature>
<feature type="compositionally biased region" description="Basic and acidic residues" evidence="2">
    <location>
        <begin position="159"/>
        <end position="172"/>
    </location>
</feature>
<proteinExistence type="inferred from homology"/>
<name>P19_HARV</name>
<evidence type="ECO:0000250" key="1"/>
<evidence type="ECO:0000256" key="2">
    <source>
        <dbReference type="SAM" id="MobiDB-lite"/>
    </source>
</evidence>
<evidence type="ECO:0000305" key="3"/>
<reference key="1">
    <citation type="journal article" date="2004" name="Eur. J. Plant Pathol.">
        <title>Isolation of two strains of a new tombusvirus (Havel river virus, HaRV) from surface waters in Germany.</title>
        <authorList>
            <person name="Koenig R."/>
            <person name="Pfeilstetter E."/>
            <person name="Kegler H."/>
            <person name="Lesemann D.E."/>
        </authorList>
        <dbReference type="AGRICOLA" id="IND43646220"/>
    </citation>
    <scope>NUCLEOTIDE SEQUENCE [GENOMIC RNA]</scope>
    <source>
        <strain>S</strain>
    </source>
</reference>
<dbReference type="EMBL" id="AY370535">
    <property type="protein sequence ID" value="AAR28057.1"/>
    <property type="molecule type" value="Genomic_RNA"/>
</dbReference>
<dbReference type="SMR" id="Q67BS9"/>
<dbReference type="OrthoDB" id="10877at10239"/>
<dbReference type="Proteomes" id="UP000243845">
    <property type="component" value="Genome"/>
</dbReference>
<dbReference type="GO" id="GO:0044423">
    <property type="term" value="C:virion component"/>
    <property type="evidence" value="ECO:0007669"/>
    <property type="project" value="InterPro"/>
</dbReference>
<dbReference type="GO" id="GO:0003723">
    <property type="term" value="F:RNA binding"/>
    <property type="evidence" value="ECO:0007669"/>
    <property type="project" value="UniProtKB-KW"/>
</dbReference>
<dbReference type="GO" id="GO:0052170">
    <property type="term" value="P:symbiont-mediated suppression of host innate immune response"/>
    <property type="evidence" value="ECO:0007669"/>
    <property type="project" value="UniProtKB-KW"/>
</dbReference>
<dbReference type="Gene3D" id="3.30.390.180">
    <property type="entry name" value="RNA silencing suppressor P19"/>
    <property type="match status" value="1"/>
</dbReference>
<dbReference type="InterPro" id="IPR004905">
    <property type="entry name" value="Tombusvirus_p19"/>
</dbReference>
<dbReference type="InterPro" id="IPR036131">
    <property type="entry name" value="VP19_sf"/>
</dbReference>
<dbReference type="Pfam" id="PF03220">
    <property type="entry name" value="Tombus_P19"/>
    <property type="match status" value="1"/>
</dbReference>
<dbReference type="SUPFAM" id="SSF103145">
    <property type="entry name" value="Tombusvirus P19 core protein, VP19"/>
    <property type="match status" value="1"/>
</dbReference>
<protein>
    <recommendedName>
        <fullName>RNA silencing suppressor p19</fullName>
    </recommendedName>
    <alternativeName>
        <fullName>19 kDa symptom severity modulator</fullName>
    </alternativeName>
</protein>